<protein>
    <recommendedName>
        <fullName evidence="1">GTPase Der</fullName>
    </recommendedName>
    <alternativeName>
        <fullName evidence="1">GTP-binding protein EngA</fullName>
    </alternativeName>
</protein>
<accession>B1JT88</accession>
<name>DER_BURO0</name>
<sequence length="445" mass="48982">MKPVIALVGRPNVGKSTLFNRLTRSRDALVADLPGLTRDRHYGEGRVGERPYLVVDTGGFEPVAKDGILHEMARQTRQAVEEADVVVFIVDGRNGLAPQDKSIADYLRKTGRPIFLVVNKAEGMKYTAVATDFYELGLGDPRAISAAHGDGVTDMINEALEVAYAGQPEEADEDDPSRGIKIAIVGRPNVGKSTLVNALIGEDRVIAFDMPGTTRDSIYVDFERNGKKYTLIDTAGLRRRGKVFEAIEKFSVVKTLQSISDANVVILLLDAQQDISDQDAHIAGFVVEQGRALVIGVNKWDGLDDHARDRAKADLTRKLKFLDFAKSHFISAAKKTGIGALMRSVDDAYAAAMAKLPTPKLTRALIEAVEFQQPRRRGPVRPKLRYAHQGGQNPPIIVIHGNALDAVTETYKRYLENRFRETFSLTGTPLRIEFRSSNNPYADKG</sequence>
<reference key="1">
    <citation type="submission" date="2008-02" db="EMBL/GenBank/DDBJ databases">
        <title>Complete sequence of chromosome 1 of Burkholderia cenocepacia MC0-3.</title>
        <authorList>
            <person name="Copeland A."/>
            <person name="Lucas S."/>
            <person name="Lapidus A."/>
            <person name="Barry K."/>
            <person name="Bruce D."/>
            <person name="Goodwin L."/>
            <person name="Glavina del Rio T."/>
            <person name="Dalin E."/>
            <person name="Tice H."/>
            <person name="Pitluck S."/>
            <person name="Chain P."/>
            <person name="Malfatti S."/>
            <person name="Shin M."/>
            <person name="Vergez L."/>
            <person name="Schmutz J."/>
            <person name="Larimer F."/>
            <person name="Land M."/>
            <person name="Hauser L."/>
            <person name="Kyrpides N."/>
            <person name="Mikhailova N."/>
            <person name="Tiedje J."/>
            <person name="Richardson P."/>
        </authorList>
    </citation>
    <scope>NUCLEOTIDE SEQUENCE [LARGE SCALE GENOMIC DNA]</scope>
    <source>
        <strain>MC0-3</strain>
    </source>
</reference>
<organism>
    <name type="scientific">Burkholderia orbicola (strain MC0-3)</name>
    <dbReference type="NCBI Taxonomy" id="406425"/>
    <lineage>
        <taxon>Bacteria</taxon>
        <taxon>Pseudomonadati</taxon>
        <taxon>Pseudomonadota</taxon>
        <taxon>Betaproteobacteria</taxon>
        <taxon>Burkholderiales</taxon>
        <taxon>Burkholderiaceae</taxon>
        <taxon>Burkholderia</taxon>
        <taxon>Burkholderia cepacia complex</taxon>
        <taxon>Burkholderia orbicola</taxon>
    </lineage>
</organism>
<dbReference type="EMBL" id="CP000958">
    <property type="protein sequence ID" value="ACA90993.1"/>
    <property type="molecule type" value="Genomic_DNA"/>
</dbReference>
<dbReference type="RefSeq" id="WP_011549692.1">
    <property type="nucleotide sequence ID" value="NC_010508.1"/>
</dbReference>
<dbReference type="SMR" id="B1JT88"/>
<dbReference type="GeneID" id="83048605"/>
<dbReference type="KEGG" id="bcm:Bcenmc03_1832"/>
<dbReference type="HOGENOM" id="CLU_016077_6_2_4"/>
<dbReference type="Proteomes" id="UP000002169">
    <property type="component" value="Chromosome 1"/>
</dbReference>
<dbReference type="GO" id="GO:0016887">
    <property type="term" value="F:ATP hydrolysis activity"/>
    <property type="evidence" value="ECO:0007669"/>
    <property type="project" value="InterPro"/>
</dbReference>
<dbReference type="GO" id="GO:0005525">
    <property type="term" value="F:GTP binding"/>
    <property type="evidence" value="ECO:0007669"/>
    <property type="project" value="UniProtKB-UniRule"/>
</dbReference>
<dbReference type="GO" id="GO:0043022">
    <property type="term" value="F:ribosome binding"/>
    <property type="evidence" value="ECO:0007669"/>
    <property type="project" value="TreeGrafter"/>
</dbReference>
<dbReference type="GO" id="GO:0042254">
    <property type="term" value="P:ribosome biogenesis"/>
    <property type="evidence" value="ECO:0007669"/>
    <property type="project" value="UniProtKB-KW"/>
</dbReference>
<dbReference type="CDD" id="cd01894">
    <property type="entry name" value="EngA1"/>
    <property type="match status" value="1"/>
</dbReference>
<dbReference type="CDD" id="cd01895">
    <property type="entry name" value="EngA2"/>
    <property type="match status" value="1"/>
</dbReference>
<dbReference type="FunFam" id="3.30.300.20:FF:000004">
    <property type="entry name" value="GTPase Der"/>
    <property type="match status" value="1"/>
</dbReference>
<dbReference type="FunFam" id="3.40.50.300:FF:000040">
    <property type="entry name" value="GTPase Der"/>
    <property type="match status" value="1"/>
</dbReference>
<dbReference type="FunFam" id="3.40.50.300:FF:000057">
    <property type="entry name" value="GTPase Der"/>
    <property type="match status" value="1"/>
</dbReference>
<dbReference type="Gene3D" id="3.30.300.20">
    <property type="match status" value="1"/>
</dbReference>
<dbReference type="Gene3D" id="3.40.50.300">
    <property type="entry name" value="P-loop containing nucleotide triphosphate hydrolases"/>
    <property type="match status" value="2"/>
</dbReference>
<dbReference type="HAMAP" id="MF_00195">
    <property type="entry name" value="GTPase_Der"/>
    <property type="match status" value="1"/>
</dbReference>
<dbReference type="InterPro" id="IPR003593">
    <property type="entry name" value="AAA+_ATPase"/>
</dbReference>
<dbReference type="InterPro" id="IPR031166">
    <property type="entry name" value="G_ENGA"/>
</dbReference>
<dbReference type="InterPro" id="IPR006073">
    <property type="entry name" value="GTP-bd"/>
</dbReference>
<dbReference type="InterPro" id="IPR016484">
    <property type="entry name" value="GTPase_Der"/>
</dbReference>
<dbReference type="InterPro" id="IPR032859">
    <property type="entry name" value="KH_dom-like"/>
</dbReference>
<dbReference type="InterPro" id="IPR015946">
    <property type="entry name" value="KH_dom-like_a/b"/>
</dbReference>
<dbReference type="InterPro" id="IPR027417">
    <property type="entry name" value="P-loop_NTPase"/>
</dbReference>
<dbReference type="InterPro" id="IPR005225">
    <property type="entry name" value="Small_GTP-bd"/>
</dbReference>
<dbReference type="NCBIfam" id="TIGR03594">
    <property type="entry name" value="GTPase_EngA"/>
    <property type="match status" value="1"/>
</dbReference>
<dbReference type="NCBIfam" id="TIGR00231">
    <property type="entry name" value="small_GTP"/>
    <property type="match status" value="2"/>
</dbReference>
<dbReference type="PANTHER" id="PTHR43834">
    <property type="entry name" value="GTPASE DER"/>
    <property type="match status" value="1"/>
</dbReference>
<dbReference type="PANTHER" id="PTHR43834:SF6">
    <property type="entry name" value="GTPASE DER"/>
    <property type="match status" value="1"/>
</dbReference>
<dbReference type="Pfam" id="PF14714">
    <property type="entry name" value="KH_dom-like"/>
    <property type="match status" value="1"/>
</dbReference>
<dbReference type="Pfam" id="PF01926">
    <property type="entry name" value="MMR_HSR1"/>
    <property type="match status" value="2"/>
</dbReference>
<dbReference type="PIRSF" id="PIRSF006485">
    <property type="entry name" value="GTP-binding_EngA"/>
    <property type="match status" value="1"/>
</dbReference>
<dbReference type="PRINTS" id="PR00326">
    <property type="entry name" value="GTP1OBG"/>
</dbReference>
<dbReference type="SMART" id="SM00382">
    <property type="entry name" value="AAA"/>
    <property type="match status" value="2"/>
</dbReference>
<dbReference type="SUPFAM" id="SSF52540">
    <property type="entry name" value="P-loop containing nucleoside triphosphate hydrolases"/>
    <property type="match status" value="2"/>
</dbReference>
<dbReference type="PROSITE" id="PS51712">
    <property type="entry name" value="G_ENGA"/>
    <property type="match status" value="2"/>
</dbReference>
<comment type="function">
    <text evidence="1">GTPase that plays an essential role in the late steps of ribosome biogenesis.</text>
</comment>
<comment type="subunit">
    <text evidence="1">Associates with the 50S ribosomal subunit.</text>
</comment>
<comment type="similarity">
    <text evidence="1">Belongs to the TRAFAC class TrmE-Era-EngA-EngB-Septin-like GTPase superfamily. EngA (Der) GTPase family.</text>
</comment>
<gene>
    <name evidence="1" type="primary">der</name>
    <name type="synonym">engA</name>
    <name type="ordered locus">Bcenmc03_1832</name>
</gene>
<keyword id="KW-0342">GTP-binding</keyword>
<keyword id="KW-0547">Nucleotide-binding</keyword>
<keyword id="KW-0677">Repeat</keyword>
<keyword id="KW-0690">Ribosome biogenesis</keyword>
<feature type="chain" id="PRO_1000099095" description="GTPase Der">
    <location>
        <begin position="1"/>
        <end position="445"/>
    </location>
</feature>
<feature type="domain" description="EngA-type G 1">
    <location>
        <begin position="3"/>
        <end position="167"/>
    </location>
</feature>
<feature type="domain" description="EngA-type G 2">
    <location>
        <begin position="180"/>
        <end position="353"/>
    </location>
</feature>
<feature type="domain" description="KH-like" evidence="1">
    <location>
        <begin position="354"/>
        <end position="438"/>
    </location>
</feature>
<feature type="binding site" evidence="1">
    <location>
        <begin position="9"/>
        <end position="16"/>
    </location>
    <ligand>
        <name>GTP</name>
        <dbReference type="ChEBI" id="CHEBI:37565"/>
        <label>1</label>
    </ligand>
</feature>
<feature type="binding site" evidence="1">
    <location>
        <begin position="56"/>
        <end position="60"/>
    </location>
    <ligand>
        <name>GTP</name>
        <dbReference type="ChEBI" id="CHEBI:37565"/>
        <label>1</label>
    </ligand>
</feature>
<feature type="binding site" evidence="1">
    <location>
        <begin position="119"/>
        <end position="122"/>
    </location>
    <ligand>
        <name>GTP</name>
        <dbReference type="ChEBI" id="CHEBI:37565"/>
        <label>1</label>
    </ligand>
</feature>
<feature type="binding site" evidence="1">
    <location>
        <begin position="186"/>
        <end position="193"/>
    </location>
    <ligand>
        <name>GTP</name>
        <dbReference type="ChEBI" id="CHEBI:37565"/>
        <label>2</label>
    </ligand>
</feature>
<feature type="binding site" evidence="1">
    <location>
        <begin position="233"/>
        <end position="237"/>
    </location>
    <ligand>
        <name>GTP</name>
        <dbReference type="ChEBI" id="CHEBI:37565"/>
        <label>2</label>
    </ligand>
</feature>
<feature type="binding site" evidence="1">
    <location>
        <begin position="298"/>
        <end position="301"/>
    </location>
    <ligand>
        <name>GTP</name>
        <dbReference type="ChEBI" id="CHEBI:37565"/>
        <label>2</label>
    </ligand>
</feature>
<proteinExistence type="inferred from homology"/>
<evidence type="ECO:0000255" key="1">
    <source>
        <dbReference type="HAMAP-Rule" id="MF_00195"/>
    </source>
</evidence>